<dbReference type="EC" id="3.1.2.6" evidence="1"/>
<dbReference type="EMBL" id="CP001287">
    <property type="protein sequence ID" value="ACK66456.1"/>
    <property type="molecule type" value="Genomic_DNA"/>
</dbReference>
<dbReference type="RefSeq" id="WP_012595723.1">
    <property type="nucleotide sequence ID" value="NC_011726.1"/>
</dbReference>
<dbReference type="SMR" id="B7K3R6"/>
<dbReference type="STRING" id="41431.PCC8801_2445"/>
<dbReference type="KEGG" id="cyp:PCC8801_2445"/>
<dbReference type="eggNOG" id="COG0491">
    <property type="taxonomic scope" value="Bacteria"/>
</dbReference>
<dbReference type="HOGENOM" id="CLU_030571_4_1_3"/>
<dbReference type="OrthoDB" id="9802897at2"/>
<dbReference type="UniPathway" id="UPA00619">
    <property type="reaction ID" value="UER00676"/>
</dbReference>
<dbReference type="Proteomes" id="UP000008204">
    <property type="component" value="Chromosome"/>
</dbReference>
<dbReference type="GO" id="GO:0004416">
    <property type="term" value="F:hydroxyacylglutathione hydrolase activity"/>
    <property type="evidence" value="ECO:0007669"/>
    <property type="project" value="UniProtKB-UniRule"/>
</dbReference>
<dbReference type="GO" id="GO:0046872">
    <property type="term" value="F:metal ion binding"/>
    <property type="evidence" value="ECO:0007669"/>
    <property type="project" value="UniProtKB-KW"/>
</dbReference>
<dbReference type="GO" id="GO:0019243">
    <property type="term" value="P:methylglyoxal catabolic process to D-lactate via S-lactoyl-glutathione"/>
    <property type="evidence" value="ECO:0007669"/>
    <property type="project" value="InterPro"/>
</dbReference>
<dbReference type="CDD" id="cd07723">
    <property type="entry name" value="hydroxyacylglutathione_hydrolase_MBL-fold"/>
    <property type="match status" value="1"/>
</dbReference>
<dbReference type="Gene3D" id="3.60.15.10">
    <property type="entry name" value="Ribonuclease Z/Hydroxyacylglutathione hydrolase-like"/>
    <property type="match status" value="1"/>
</dbReference>
<dbReference type="HAMAP" id="MF_01374">
    <property type="entry name" value="Glyoxalase_2"/>
    <property type="match status" value="1"/>
</dbReference>
<dbReference type="InterPro" id="IPR035680">
    <property type="entry name" value="Clx_II_MBL"/>
</dbReference>
<dbReference type="InterPro" id="IPR050110">
    <property type="entry name" value="Glyoxalase_II_hydrolase"/>
</dbReference>
<dbReference type="InterPro" id="IPR032282">
    <property type="entry name" value="HAGH_C"/>
</dbReference>
<dbReference type="InterPro" id="IPR017782">
    <property type="entry name" value="Hydroxyacylglutathione_Hdrlase"/>
</dbReference>
<dbReference type="InterPro" id="IPR001279">
    <property type="entry name" value="Metallo-B-lactamas"/>
</dbReference>
<dbReference type="InterPro" id="IPR036866">
    <property type="entry name" value="RibonucZ/Hydroxyglut_hydro"/>
</dbReference>
<dbReference type="NCBIfam" id="TIGR03413">
    <property type="entry name" value="GSH_gloB"/>
    <property type="match status" value="1"/>
</dbReference>
<dbReference type="PANTHER" id="PTHR43705">
    <property type="entry name" value="HYDROXYACYLGLUTATHIONE HYDROLASE"/>
    <property type="match status" value="1"/>
</dbReference>
<dbReference type="PANTHER" id="PTHR43705:SF1">
    <property type="entry name" value="HYDROXYACYLGLUTATHIONE HYDROLASE GLOB"/>
    <property type="match status" value="1"/>
</dbReference>
<dbReference type="Pfam" id="PF16123">
    <property type="entry name" value="HAGH_C"/>
    <property type="match status" value="1"/>
</dbReference>
<dbReference type="Pfam" id="PF00753">
    <property type="entry name" value="Lactamase_B"/>
    <property type="match status" value="1"/>
</dbReference>
<dbReference type="PIRSF" id="PIRSF005457">
    <property type="entry name" value="Glx"/>
    <property type="match status" value="1"/>
</dbReference>
<dbReference type="SMART" id="SM00849">
    <property type="entry name" value="Lactamase_B"/>
    <property type="match status" value="1"/>
</dbReference>
<dbReference type="SUPFAM" id="SSF56281">
    <property type="entry name" value="Metallo-hydrolase/oxidoreductase"/>
    <property type="match status" value="1"/>
</dbReference>
<comment type="function">
    <text evidence="1">Thiolesterase that catalyzes the hydrolysis of S-D-lactoyl-glutathione to form glutathione and D-lactic acid.</text>
</comment>
<comment type="catalytic activity">
    <reaction evidence="1">
        <text>an S-(2-hydroxyacyl)glutathione + H2O = a 2-hydroxy carboxylate + glutathione + H(+)</text>
        <dbReference type="Rhea" id="RHEA:21864"/>
        <dbReference type="ChEBI" id="CHEBI:15377"/>
        <dbReference type="ChEBI" id="CHEBI:15378"/>
        <dbReference type="ChEBI" id="CHEBI:57925"/>
        <dbReference type="ChEBI" id="CHEBI:58896"/>
        <dbReference type="ChEBI" id="CHEBI:71261"/>
        <dbReference type="EC" id="3.1.2.6"/>
    </reaction>
</comment>
<comment type="cofactor">
    <cofactor evidence="1">
        <name>Zn(2+)</name>
        <dbReference type="ChEBI" id="CHEBI:29105"/>
    </cofactor>
    <text evidence="1">Binds 2 Zn(2+) ions per subunit.</text>
</comment>
<comment type="pathway">
    <text evidence="1">Secondary metabolite metabolism; methylglyoxal degradation; (R)-lactate from methylglyoxal: step 2/2.</text>
</comment>
<comment type="subunit">
    <text evidence="1">Monomer.</text>
</comment>
<comment type="similarity">
    <text evidence="1">Belongs to the metallo-beta-lactamase superfamily. Glyoxalase II family.</text>
</comment>
<reference key="1">
    <citation type="journal article" date="2011" name="MBio">
        <title>Novel metabolic attributes of the genus Cyanothece, comprising a group of unicellular nitrogen-fixing Cyanobacteria.</title>
        <authorList>
            <person name="Bandyopadhyay A."/>
            <person name="Elvitigala T."/>
            <person name="Welsh E."/>
            <person name="Stockel J."/>
            <person name="Liberton M."/>
            <person name="Min H."/>
            <person name="Sherman L.A."/>
            <person name="Pakrasi H.B."/>
        </authorList>
    </citation>
    <scope>NUCLEOTIDE SEQUENCE [LARGE SCALE GENOMIC DNA]</scope>
    <source>
        <strain>PCC 8801 / RF-1</strain>
    </source>
</reference>
<protein>
    <recommendedName>
        <fullName evidence="1">Hydroxyacylglutathione hydrolase</fullName>
        <ecNumber evidence="1">3.1.2.6</ecNumber>
    </recommendedName>
    <alternativeName>
        <fullName evidence="1">Glyoxalase II</fullName>
        <shortName evidence="1">Glx II</shortName>
    </alternativeName>
</protein>
<feature type="chain" id="PRO_1000144756" description="Hydroxyacylglutathione hydrolase">
    <location>
        <begin position="1"/>
        <end position="257"/>
    </location>
</feature>
<feature type="binding site" evidence="1">
    <location>
        <position position="54"/>
    </location>
    <ligand>
        <name>Zn(2+)</name>
        <dbReference type="ChEBI" id="CHEBI:29105"/>
        <label>1</label>
    </ligand>
</feature>
<feature type="binding site" evidence="1">
    <location>
        <position position="56"/>
    </location>
    <ligand>
        <name>Zn(2+)</name>
        <dbReference type="ChEBI" id="CHEBI:29105"/>
        <label>1</label>
    </ligand>
</feature>
<feature type="binding site" evidence="1">
    <location>
        <position position="58"/>
    </location>
    <ligand>
        <name>Zn(2+)</name>
        <dbReference type="ChEBI" id="CHEBI:29105"/>
        <label>2</label>
    </ligand>
</feature>
<feature type="binding site" evidence="1">
    <location>
        <position position="59"/>
    </location>
    <ligand>
        <name>Zn(2+)</name>
        <dbReference type="ChEBI" id="CHEBI:29105"/>
        <label>2</label>
    </ligand>
</feature>
<feature type="binding site" evidence="1">
    <location>
        <position position="113"/>
    </location>
    <ligand>
        <name>Zn(2+)</name>
        <dbReference type="ChEBI" id="CHEBI:29105"/>
        <label>1</label>
    </ligand>
</feature>
<feature type="binding site" evidence="1">
    <location>
        <position position="137"/>
    </location>
    <ligand>
        <name>Zn(2+)</name>
        <dbReference type="ChEBI" id="CHEBI:29105"/>
        <label>1</label>
    </ligand>
</feature>
<feature type="binding site" evidence="1">
    <location>
        <position position="137"/>
    </location>
    <ligand>
        <name>Zn(2+)</name>
        <dbReference type="ChEBI" id="CHEBI:29105"/>
        <label>2</label>
    </ligand>
</feature>
<feature type="binding site" evidence="1">
    <location>
        <position position="175"/>
    </location>
    <ligand>
        <name>Zn(2+)</name>
        <dbReference type="ChEBI" id="CHEBI:29105"/>
        <label>2</label>
    </ligand>
</feature>
<organism>
    <name type="scientific">Rippkaea orientalis (strain PCC 8801 / RF-1)</name>
    <name type="common">Cyanothece sp. (strain PCC 8801)</name>
    <dbReference type="NCBI Taxonomy" id="41431"/>
    <lineage>
        <taxon>Bacteria</taxon>
        <taxon>Bacillati</taxon>
        <taxon>Cyanobacteriota</taxon>
        <taxon>Cyanophyceae</taxon>
        <taxon>Oscillatoriophycideae</taxon>
        <taxon>Chroococcales</taxon>
        <taxon>Aphanothecaceae</taxon>
        <taxon>Rippkaea</taxon>
        <taxon>Rippkaea orientalis</taxon>
    </lineage>
</organism>
<evidence type="ECO:0000255" key="1">
    <source>
        <dbReference type="HAMAP-Rule" id="MF_01374"/>
    </source>
</evidence>
<sequence>MEIKRLPALSDNYIFLLYDADTQTAAVVDPAEPTPVLECLNKLGAQLVAIFNTHHHYDHVGANNQLQQYFPNLCIYGGSEDRGRIPGQQVFLKEGDRVEFGQRVGEVLFVPGHTRAHIAYYFPPKLSQETGELFCGDTLFGGGCGRLFEGTPTQMVNSLTKLRNLPDNTRVWCAHEYTLKNLQFALTVDPDNLVLKNRYHQVKEFRHQGQATVPSILGEEKLTNPFLRWDNSAIQLTIGMTDPARVFGKLRGMKDTF</sequence>
<accession>B7K3R6</accession>
<gene>
    <name evidence="1" type="primary">gloB</name>
    <name type="ordered locus">PCC8801_2445</name>
</gene>
<name>GLO2_RIPO1</name>
<keyword id="KW-0378">Hydrolase</keyword>
<keyword id="KW-0479">Metal-binding</keyword>
<keyword id="KW-1185">Reference proteome</keyword>
<keyword id="KW-0862">Zinc</keyword>
<proteinExistence type="inferred from homology"/>